<gene>
    <name type="ORF">ORF112</name>
</gene>
<organismHost>
    <name type="scientific">Magallana gigas</name>
    <name type="common">Pacific oyster</name>
    <name type="synonym">Crassostrea gigas</name>
    <dbReference type="NCBI Taxonomy" id="29159"/>
</organismHost>
<organismHost>
    <name type="scientific">Pecten maximus</name>
    <name type="common">King scallop</name>
    <name type="synonym">Pilgrim's clam</name>
    <dbReference type="NCBI Taxonomy" id="6579"/>
</organismHost>
<name>Y112_OSHVF</name>
<sequence length="462" mass="52132">MVDKIQSRWPTLMNQVSFDERYVNYKDRDADTVLARRLSACNLGFVYTKNFSAKTKRMLTSATRSICATSTGNNIDFGIFAAMLRNCDKVGVNSKSLTNLQPVGGAIFEEMFNFSQRNDFFIRPTIPFVGKVRAITQSLTPSMVIMPRVNDDRFGPSGIATFNAVLSGIMPVNEPERGLYLPTDLTYNIERITRSVMHKYTDETTNMPVFMAIGPYNEMLCGNNLGNKYLPRNTAFNASSVLQGRKVGDKIAYDQKLCCCFWIGTHNETEYSVLTELQKICIRNGRASVIPDEMKEIAVIKIGVVPSNKSACASFDSKTLRIENFVFQPDHTWELTQYTDRRVFSAANVDTSDFKDVEGDVNSIFDYGYMEMAGTEDKILEEEEEETMDETPEDILRTSNLQFAQPIGNNKSSPMKREFTAMEEDKTETGDIFKLLSQQKPAKGAKSKSKKYKKTEEDLSAV</sequence>
<keyword id="KW-1185">Reference proteome</keyword>
<accession>Q6R7B8</accession>
<reference key="1">
    <citation type="journal article" date="2005" name="J. Gen. Virol.">
        <title>A novel class of herpesvirus with bivalve hosts.</title>
        <authorList>
            <person name="Davison A.J."/>
            <person name="Trus B.L."/>
            <person name="Cheng N."/>
            <person name="Steven A.C."/>
            <person name="Watson M.S."/>
            <person name="Cunningham C."/>
            <person name="Le Deuff R.M."/>
            <person name="Renault T."/>
        </authorList>
    </citation>
    <scope>NUCLEOTIDE SEQUENCE [LARGE SCALE GENOMIC DNA]</scope>
</reference>
<evidence type="ECO:0000256" key="1">
    <source>
        <dbReference type="SAM" id="MobiDB-lite"/>
    </source>
</evidence>
<protein>
    <recommendedName>
        <fullName>Uncharacterized protein ORF112</fullName>
    </recommendedName>
</protein>
<proteinExistence type="predicted"/>
<dbReference type="EMBL" id="AY509253">
    <property type="protein sequence ID" value="AAS00997.1"/>
    <property type="molecule type" value="Genomic_DNA"/>
</dbReference>
<dbReference type="RefSeq" id="YP_024650.1">
    <property type="nucleotide sequence ID" value="NC_005881.2"/>
</dbReference>
<dbReference type="KEGG" id="vg:2948252"/>
<dbReference type="Proteomes" id="UP000007021">
    <property type="component" value="Segment"/>
</dbReference>
<organism>
    <name type="scientific">Ostreid herpesvirus 1 (isolate France)</name>
    <name type="common">OsHV-1</name>
    <name type="synonym">Pacific oyster herpesvirus</name>
    <dbReference type="NCBI Taxonomy" id="654903"/>
    <lineage>
        <taxon>Viruses</taxon>
        <taxon>Duplodnaviria</taxon>
        <taxon>Heunggongvirae</taxon>
        <taxon>Peploviricota</taxon>
        <taxon>Herviviricetes</taxon>
        <taxon>Herpesvirales</taxon>
        <taxon>Malacoherpesviridae</taxon>
        <taxon>Ostreavirus</taxon>
        <taxon>Ostreavirus ostreidmalaco1</taxon>
        <taxon>Ostreid herpesvirus 1</taxon>
    </lineage>
</organism>
<feature type="chain" id="PRO_0000385126" description="Uncharacterized protein ORF112">
    <location>
        <begin position="1"/>
        <end position="462"/>
    </location>
</feature>
<feature type="region of interest" description="Disordered" evidence="1">
    <location>
        <begin position="405"/>
        <end position="462"/>
    </location>
</feature>
<feature type="compositionally biased region" description="Basic and acidic residues" evidence="1">
    <location>
        <begin position="415"/>
        <end position="431"/>
    </location>
</feature>
<feature type="compositionally biased region" description="Basic residues" evidence="1">
    <location>
        <begin position="443"/>
        <end position="453"/>
    </location>
</feature>